<reference key="1">
    <citation type="journal article" date="2001" name="DNA Res.">
        <title>Complete genomic sequence of the filamentous nitrogen-fixing cyanobacterium Anabaena sp. strain PCC 7120.</title>
        <authorList>
            <person name="Kaneko T."/>
            <person name="Nakamura Y."/>
            <person name="Wolk C.P."/>
            <person name="Kuritz T."/>
            <person name="Sasamoto S."/>
            <person name="Watanabe A."/>
            <person name="Iriguchi M."/>
            <person name="Ishikawa A."/>
            <person name="Kawashima K."/>
            <person name="Kimura T."/>
            <person name="Kishida Y."/>
            <person name="Kohara M."/>
            <person name="Matsumoto M."/>
            <person name="Matsuno A."/>
            <person name="Muraki A."/>
            <person name="Nakazaki N."/>
            <person name="Shimpo S."/>
            <person name="Sugimoto M."/>
            <person name="Takazawa M."/>
            <person name="Yamada M."/>
            <person name="Yasuda M."/>
            <person name="Tabata S."/>
        </authorList>
    </citation>
    <scope>NUCLEOTIDE SEQUENCE [LARGE SCALE GENOMIC DNA]</scope>
    <source>
        <strain>PCC 7120 / SAG 25.82 / UTEX 2576</strain>
    </source>
</reference>
<name>LEUC_NOSS1</name>
<protein>
    <recommendedName>
        <fullName evidence="1">3-isopropylmalate dehydratase large subunit</fullName>
        <ecNumber evidence="1">4.2.1.33</ecNumber>
    </recommendedName>
    <alternativeName>
        <fullName evidence="1">Alpha-IPM isomerase</fullName>
        <shortName evidence="1">IPMI</shortName>
    </alternativeName>
    <alternativeName>
        <fullName evidence="1">Isopropylmalate isomerase</fullName>
    </alternativeName>
</protein>
<organism>
    <name type="scientific">Nostoc sp. (strain PCC 7120 / SAG 25.82 / UTEX 2576)</name>
    <dbReference type="NCBI Taxonomy" id="103690"/>
    <lineage>
        <taxon>Bacteria</taxon>
        <taxon>Bacillati</taxon>
        <taxon>Cyanobacteriota</taxon>
        <taxon>Cyanophyceae</taxon>
        <taxon>Nostocales</taxon>
        <taxon>Nostocaceae</taxon>
        <taxon>Nostoc</taxon>
    </lineage>
</organism>
<feature type="chain" id="PRO_0000076690" description="3-isopropylmalate dehydratase large subunit">
    <location>
        <begin position="1"/>
        <end position="467"/>
    </location>
</feature>
<feature type="binding site" evidence="1">
    <location>
        <position position="347"/>
    </location>
    <ligand>
        <name>[4Fe-4S] cluster</name>
        <dbReference type="ChEBI" id="CHEBI:49883"/>
    </ligand>
</feature>
<feature type="binding site" evidence="1">
    <location>
        <position position="407"/>
    </location>
    <ligand>
        <name>[4Fe-4S] cluster</name>
        <dbReference type="ChEBI" id="CHEBI:49883"/>
    </ligand>
</feature>
<feature type="binding site" evidence="1">
    <location>
        <position position="410"/>
    </location>
    <ligand>
        <name>[4Fe-4S] cluster</name>
        <dbReference type="ChEBI" id="CHEBI:49883"/>
    </ligand>
</feature>
<proteinExistence type="inferred from homology"/>
<sequence>MSKGTLFDKVWDLHTVGTLPSGLTQLFIGLHLVHEVTSPQAFAMLRERGLKVLFPERTVATVDHIVPTENQARPFVDRLAEEMIQALEQNCQENNITFYNIGSGNQGIVHVIAPELGLTQPGMTIACGDSHTSSHGAFGAIAFGIGTSQVRDVLASQTLSLSKLKVRKIEVNGALNPGVYAKDVILHIIRTLGVKGGVGYAYEYAGTTFEQMNMEERMTVCNMAIEGGARCGYVNPDQVTYDYLQGRDFAPQGADWEKAVTWWESIKSDADAEYDDVIVFNAADIPPTVTWGITPGQGIGVNQLIPQPEELLEEDRFVAEEAYRYMDLYPGQPIKGTKIDVCFIGSCTNGRLTDLQEAAKIAKGRRVAAGVKAFVVPGSERVKKAAEAEGLDKIFEAAGFEWREPGCSMCLAMNPDKLEGRQISASSSNRNFKGRQGSASGRTLLMSPAMVATAAIQGEVADVRELL</sequence>
<comment type="function">
    <text evidence="1">Catalyzes the isomerization between 2-isopropylmalate and 3-isopropylmalate, via the formation of 2-isopropylmaleate.</text>
</comment>
<comment type="catalytic activity">
    <reaction evidence="1">
        <text>(2R,3S)-3-isopropylmalate = (2S)-2-isopropylmalate</text>
        <dbReference type="Rhea" id="RHEA:32287"/>
        <dbReference type="ChEBI" id="CHEBI:1178"/>
        <dbReference type="ChEBI" id="CHEBI:35121"/>
        <dbReference type="EC" id="4.2.1.33"/>
    </reaction>
</comment>
<comment type="cofactor">
    <cofactor evidence="1">
        <name>[4Fe-4S] cluster</name>
        <dbReference type="ChEBI" id="CHEBI:49883"/>
    </cofactor>
    <text evidence="1">Binds 1 [4Fe-4S] cluster per subunit.</text>
</comment>
<comment type="pathway">
    <text evidence="1">Amino-acid biosynthesis; L-leucine biosynthesis; L-leucine from 3-methyl-2-oxobutanoate: step 2/4.</text>
</comment>
<comment type="subunit">
    <text evidence="1">Heterodimer of LeuC and LeuD.</text>
</comment>
<comment type="similarity">
    <text evidence="1">Belongs to the aconitase/IPM isomerase family. LeuC type 1 subfamily.</text>
</comment>
<dbReference type="EC" id="4.2.1.33" evidence="1"/>
<dbReference type="EMBL" id="BA000019">
    <property type="protein sequence ID" value="BAB73374.1"/>
    <property type="molecule type" value="Genomic_DNA"/>
</dbReference>
<dbReference type="PIR" id="AF1983">
    <property type="entry name" value="AF1983"/>
</dbReference>
<dbReference type="RefSeq" id="WP_010995589.1">
    <property type="nucleotide sequence ID" value="NZ_RSCN01000040.1"/>
</dbReference>
<dbReference type="SMR" id="Q8YX02"/>
<dbReference type="STRING" id="103690.gene:10493432"/>
<dbReference type="KEGG" id="ana:all1417"/>
<dbReference type="eggNOG" id="COG0065">
    <property type="taxonomic scope" value="Bacteria"/>
</dbReference>
<dbReference type="OrthoDB" id="9802769at2"/>
<dbReference type="UniPathway" id="UPA00048">
    <property type="reaction ID" value="UER00071"/>
</dbReference>
<dbReference type="Proteomes" id="UP000002483">
    <property type="component" value="Chromosome"/>
</dbReference>
<dbReference type="GO" id="GO:0003861">
    <property type="term" value="F:3-isopropylmalate dehydratase activity"/>
    <property type="evidence" value="ECO:0007669"/>
    <property type="project" value="UniProtKB-UniRule"/>
</dbReference>
<dbReference type="GO" id="GO:0051539">
    <property type="term" value="F:4 iron, 4 sulfur cluster binding"/>
    <property type="evidence" value="ECO:0007669"/>
    <property type="project" value="UniProtKB-KW"/>
</dbReference>
<dbReference type="GO" id="GO:0046872">
    <property type="term" value="F:metal ion binding"/>
    <property type="evidence" value="ECO:0007669"/>
    <property type="project" value="UniProtKB-KW"/>
</dbReference>
<dbReference type="GO" id="GO:0009098">
    <property type="term" value="P:L-leucine biosynthetic process"/>
    <property type="evidence" value="ECO:0007669"/>
    <property type="project" value="UniProtKB-UniRule"/>
</dbReference>
<dbReference type="CDD" id="cd01583">
    <property type="entry name" value="IPMI"/>
    <property type="match status" value="1"/>
</dbReference>
<dbReference type="Gene3D" id="3.30.499.10">
    <property type="entry name" value="Aconitase, domain 3"/>
    <property type="match status" value="2"/>
</dbReference>
<dbReference type="HAMAP" id="MF_01026">
    <property type="entry name" value="LeuC_type1"/>
    <property type="match status" value="1"/>
</dbReference>
<dbReference type="InterPro" id="IPR004430">
    <property type="entry name" value="3-IsopropMal_deHydase_lsu"/>
</dbReference>
<dbReference type="InterPro" id="IPR015931">
    <property type="entry name" value="Acnase/IPM_dHydase_lsu_aba_1/3"/>
</dbReference>
<dbReference type="InterPro" id="IPR001030">
    <property type="entry name" value="Acoase/IPM_deHydtase_lsu_aba"/>
</dbReference>
<dbReference type="InterPro" id="IPR018136">
    <property type="entry name" value="Aconitase_4Fe-4S_BS"/>
</dbReference>
<dbReference type="InterPro" id="IPR036008">
    <property type="entry name" value="Aconitase_4Fe-4S_dom"/>
</dbReference>
<dbReference type="InterPro" id="IPR050067">
    <property type="entry name" value="IPM_dehydratase_rel_enz"/>
</dbReference>
<dbReference type="InterPro" id="IPR033941">
    <property type="entry name" value="IPMI_cat"/>
</dbReference>
<dbReference type="NCBIfam" id="TIGR00170">
    <property type="entry name" value="leuC"/>
    <property type="match status" value="1"/>
</dbReference>
<dbReference type="NCBIfam" id="NF004016">
    <property type="entry name" value="PRK05478.1"/>
    <property type="match status" value="1"/>
</dbReference>
<dbReference type="NCBIfam" id="NF009116">
    <property type="entry name" value="PRK12466.1"/>
    <property type="match status" value="1"/>
</dbReference>
<dbReference type="PANTHER" id="PTHR43822:SF9">
    <property type="entry name" value="3-ISOPROPYLMALATE DEHYDRATASE"/>
    <property type="match status" value="1"/>
</dbReference>
<dbReference type="PANTHER" id="PTHR43822">
    <property type="entry name" value="HOMOACONITASE, MITOCHONDRIAL-RELATED"/>
    <property type="match status" value="1"/>
</dbReference>
<dbReference type="Pfam" id="PF00330">
    <property type="entry name" value="Aconitase"/>
    <property type="match status" value="1"/>
</dbReference>
<dbReference type="PRINTS" id="PR00415">
    <property type="entry name" value="ACONITASE"/>
</dbReference>
<dbReference type="SUPFAM" id="SSF53732">
    <property type="entry name" value="Aconitase iron-sulfur domain"/>
    <property type="match status" value="1"/>
</dbReference>
<dbReference type="PROSITE" id="PS00450">
    <property type="entry name" value="ACONITASE_1"/>
    <property type="match status" value="1"/>
</dbReference>
<dbReference type="PROSITE" id="PS01244">
    <property type="entry name" value="ACONITASE_2"/>
    <property type="match status" value="1"/>
</dbReference>
<keyword id="KW-0004">4Fe-4S</keyword>
<keyword id="KW-0028">Amino-acid biosynthesis</keyword>
<keyword id="KW-0100">Branched-chain amino acid biosynthesis</keyword>
<keyword id="KW-0408">Iron</keyword>
<keyword id="KW-0411">Iron-sulfur</keyword>
<keyword id="KW-0432">Leucine biosynthesis</keyword>
<keyword id="KW-0456">Lyase</keyword>
<keyword id="KW-0479">Metal-binding</keyword>
<keyword id="KW-1185">Reference proteome</keyword>
<evidence type="ECO:0000255" key="1">
    <source>
        <dbReference type="HAMAP-Rule" id="MF_01026"/>
    </source>
</evidence>
<accession>Q8YX02</accession>
<gene>
    <name evidence="1" type="primary">leuC</name>
    <name type="ordered locus">all1417</name>
</gene>